<evidence type="ECO:0000250" key="1"/>
<evidence type="ECO:0000305" key="2"/>
<organism>
    <name type="scientific">Sus scrofa</name>
    <name type="common">Pig</name>
    <dbReference type="NCBI Taxonomy" id="9823"/>
    <lineage>
        <taxon>Eukaryota</taxon>
        <taxon>Metazoa</taxon>
        <taxon>Chordata</taxon>
        <taxon>Craniata</taxon>
        <taxon>Vertebrata</taxon>
        <taxon>Euteleostomi</taxon>
        <taxon>Mammalia</taxon>
        <taxon>Eutheria</taxon>
        <taxon>Laurasiatheria</taxon>
        <taxon>Artiodactyla</taxon>
        <taxon>Suina</taxon>
        <taxon>Suidae</taxon>
        <taxon>Sus</taxon>
    </lineage>
</organism>
<feature type="chain" id="PRO_0000045382" description="Cocaine- and amphetamine-regulated transcript protein">
    <location>
        <begin position="1"/>
        <end position="66" status="greater than"/>
    </location>
</feature>
<feature type="peptide" id="PRO_0000004440" description="CART(55-102)" evidence="1">
    <location>
        <begin position="21"/>
        <end position="66" status="greater than"/>
    </location>
</feature>
<feature type="peptide" id="PRO_0000004441" description="CART(62-102)" evidence="1">
    <location>
        <begin position="28"/>
        <end position="66" status="greater than"/>
    </location>
</feature>
<feature type="disulfide bond" evidence="1">
    <location>
        <begin position="34"/>
        <end position="52"/>
    </location>
</feature>
<feature type="disulfide bond" evidence="1">
    <location>
        <begin position="40"/>
        <end position="60"/>
    </location>
</feature>
<feature type="non-terminal residue">
    <location>
        <position position="1"/>
    </location>
</feature>
<feature type="non-terminal residue">
    <location>
        <position position="66"/>
    </location>
</feature>
<protein>
    <recommendedName>
        <fullName>Cocaine- and amphetamine-regulated transcript protein</fullName>
    </recommendedName>
    <component>
        <recommendedName>
            <fullName>CART(55-102)</fullName>
        </recommendedName>
    </component>
    <component>
        <recommendedName>
            <fullName>CART(62-102)</fullName>
        </recommendedName>
    </component>
</protein>
<keyword id="KW-0165">Cleavage on pair of basic residues</keyword>
<keyword id="KW-1015">Disulfide bond</keyword>
<keyword id="KW-0527">Neuropeptide</keyword>
<keyword id="KW-0529">Neurotransmitter</keyword>
<keyword id="KW-1185">Reference proteome</keyword>
<keyword id="KW-0964">Secreted</keyword>
<reference key="1">
    <citation type="submission" date="2001-01" db="EMBL/GenBank/DDBJ databases">
        <title>Sus scrofa cocaine- and amphetamine-regulated transcript (CART) cDNA.</title>
        <authorList>
            <person name="Matteri R.L."/>
        </authorList>
    </citation>
    <scope>NUCLEOTIDE SEQUENCE [MRNA]</scope>
    <source>
        <tissue>Hypothalamus</tissue>
    </source>
</reference>
<accession>Q9BDP9</accession>
<sequence length="66" mass="7451">HEKELIEALQEVLKKLKSKRIPIYEKKYGQVPMCDAGEQCAVRKGARIGKLCDCPRGTSCNSFLLK</sequence>
<gene>
    <name type="primary">CARTPT</name>
    <name type="synonym">CART</name>
</gene>
<name>CART_PIG</name>
<proteinExistence type="evidence at transcript level"/>
<comment type="function">
    <text evidence="1">Satiety factor closely associated with the actions of leptin and neuropeptide y; this anorectic peptide inhibits both normal and starvation-induced feeding and completely blocks the feeding response induced by neuropeptide Y and regulated by leptin in the hypothalamus.</text>
</comment>
<comment type="subcellular location">
    <subcellularLocation>
        <location evidence="2">Secreted</location>
    </subcellularLocation>
</comment>
<comment type="similarity">
    <text evidence="2">Belongs to the CART family.</text>
</comment>
<dbReference type="EMBL" id="AF338229">
    <property type="protein sequence ID" value="AAK26325.1"/>
    <property type="molecule type" value="mRNA"/>
</dbReference>
<dbReference type="SMR" id="Q9BDP9"/>
<dbReference type="STRING" id="9823.ENSSSCP00000017982"/>
<dbReference type="PaxDb" id="9823-ENSSSCP00000017982"/>
<dbReference type="PeptideAtlas" id="Q9BDP9"/>
<dbReference type="eggNOG" id="ENOG502S2YU">
    <property type="taxonomic scope" value="Eukaryota"/>
</dbReference>
<dbReference type="HOGENOM" id="CLU_157363_1_0_1"/>
<dbReference type="InParanoid" id="Q9BDP9"/>
<dbReference type="Proteomes" id="UP000008227">
    <property type="component" value="Unplaced"/>
</dbReference>
<dbReference type="Proteomes" id="UP000314985">
    <property type="component" value="Unplaced"/>
</dbReference>
<dbReference type="Proteomes" id="UP000694570">
    <property type="component" value="Unplaced"/>
</dbReference>
<dbReference type="Proteomes" id="UP000694571">
    <property type="component" value="Unplaced"/>
</dbReference>
<dbReference type="Proteomes" id="UP000694720">
    <property type="component" value="Unplaced"/>
</dbReference>
<dbReference type="Proteomes" id="UP000694722">
    <property type="component" value="Unplaced"/>
</dbReference>
<dbReference type="Proteomes" id="UP000694723">
    <property type="component" value="Unplaced"/>
</dbReference>
<dbReference type="Proteomes" id="UP000694724">
    <property type="component" value="Unplaced"/>
</dbReference>
<dbReference type="Proteomes" id="UP000694725">
    <property type="component" value="Unplaced"/>
</dbReference>
<dbReference type="Proteomes" id="UP000694726">
    <property type="component" value="Unplaced"/>
</dbReference>
<dbReference type="Proteomes" id="UP000694727">
    <property type="component" value="Unplaced"/>
</dbReference>
<dbReference type="Proteomes" id="UP000694728">
    <property type="component" value="Unplaced"/>
</dbReference>
<dbReference type="GO" id="GO:0005615">
    <property type="term" value="C:extracellular space"/>
    <property type="evidence" value="ECO:0000250"/>
    <property type="project" value="HGNC-UCL"/>
</dbReference>
<dbReference type="GO" id="GO:0045202">
    <property type="term" value="C:synapse"/>
    <property type="evidence" value="ECO:0007669"/>
    <property type="project" value="GOC"/>
</dbReference>
<dbReference type="GO" id="GO:0005184">
    <property type="term" value="F:neuropeptide hormone activity"/>
    <property type="evidence" value="ECO:0007669"/>
    <property type="project" value="InterPro"/>
</dbReference>
<dbReference type="GO" id="GO:0008343">
    <property type="term" value="P:adult feeding behavior"/>
    <property type="evidence" value="ECO:0000250"/>
    <property type="project" value="HGNC-UCL"/>
</dbReference>
<dbReference type="GO" id="GO:0009267">
    <property type="term" value="P:cellular response to starvation"/>
    <property type="evidence" value="ECO:0000250"/>
    <property type="project" value="HGNC-UCL"/>
</dbReference>
<dbReference type="GO" id="GO:0007268">
    <property type="term" value="P:chemical synaptic transmission"/>
    <property type="evidence" value="ECO:0007669"/>
    <property type="project" value="UniProtKB-KW"/>
</dbReference>
<dbReference type="GO" id="GO:0032922">
    <property type="term" value="P:circadian regulation of gene expression"/>
    <property type="evidence" value="ECO:0000250"/>
    <property type="project" value="HGNC-UCL"/>
</dbReference>
<dbReference type="GO" id="GO:0007186">
    <property type="term" value="P:G protein-coupled receptor signaling pathway"/>
    <property type="evidence" value="ECO:0000250"/>
    <property type="project" value="HGNC-UCL"/>
</dbReference>
<dbReference type="GO" id="GO:0001678">
    <property type="term" value="P:intracellular glucose homeostasis"/>
    <property type="evidence" value="ECO:0000250"/>
    <property type="project" value="HGNC-UCL"/>
</dbReference>
<dbReference type="GO" id="GO:0032099">
    <property type="term" value="P:negative regulation of appetite"/>
    <property type="evidence" value="ECO:0000250"/>
    <property type="project" value="HGNC-UCL"/>
</dbReference>
<dbReference type="GO" id="GO:0007218">
    <property type="term" value="P:neuropeptide signaling pathway"/>
    <property type="evidence" value="ECO:0007669"/>
    <property type="project" value="UniProtKB-KW"/>
</dbReference>
<dbReference type="GO" id="GO:0045777">
    <property type="term" value="P:positive regulation of blood pressure"/>
    <property type="evidence" value="ECO:0000250"/>
    <property type="project" value="HGNC-UCL"/>
</dbReference>
<dbReference type="GO" id="GO:0032812">
    <property type="term" value="P:positive regulation of epinephrine secretion"/>
    <property type="evidence" value="ECO:0000250"/>
    <property type="project" value="HGNC-UCL"/>
</dbReference>
<dbReference type="GO" id="GO:0043410">
    <property type="term" value="P:positive regulation of MAPK cascade"/>
    <property type="evidence" value="ECO:0000250"/>
    <property type="project" value="HGNC-UCL"/>
</dbReference>
<dbReference type="GO" id="GO:0051971">
    <property type="term" value="P:positive regulation of transmission of nerve impulse"/>
    <property type="evidence" value="ECO:0000250"/>
    <property type="project" value="HGNC-UCL"/>
</dbReference>
<dbReference type="CDD" id="cd22741">
    <property type="entry name" value="CART_CTD-like"/>
    <property type="match status" value="1"/>
</dbReference>
<dbReference type="FunFam" id="4.10.40.30:FF:000001">
    <property type="entry name" value="Cocaine-and amphetamine-regulated transcript protein"/>
    <property type="match status" value="1"/>
</dbReference>
<dbReference type="Gene3D" id="4.10.40.30">
    <property type="entry name" value="CART, C-terminal domain"/>
    <property type="match status" value="1"/>
</dbReference>
<dbReference type="InterPro" id="IPR009106">
    <property type="entry name" value="CART"/>
</dbReference>
<dbReference type="InterPro" id="IPR036722">
    <property type="entry name" value="CART_C_sf"/>
</dbReference>
<dbReference type="PANTHER" id="PTHR16655">
    <property type="entry name" value="COCAINE AND AMPHETAMINE REGULATED TRANSCRIPT PROTEIN"/>
    <property type="match status" value="1"/>
</dbReference>
<dbReference type="PANTHER" id="PTHR16655:SF0">
    <property type="entry name" value="COCAINE- AND AMPHETAMINE-REGULATED TRANSCRIPT PROTEIN"/>
    <property type="match status" value="1"/>
</dbReference>
<dbReference type="Pfam" id="PF06373">
    <property type="entry name" value="CART"/>
    <property type="match status" value="1"/>
</dbReference>
<dbReference type="SUPFAM" id="SSF64546">
    <property type="entry name" value="Satiety factor CART (cocaine and amphetamine regulated transcript)"/>
    <property type="match status" value="1"/>
</dbReference>